<evidence type="ECO:0000250" key="1"/>
<evidence type="ECO:0000255" key="2">
    <source>
        <dbReference type="PROSITE-ProRule" id="PRU00108"/>
    </source>
</evidence>
<evidence type="ECO:0000256" key="3">
    <source>
        <dbReference type="SAM" id="MobiDB-lite"/>
    </source>
</evidence>
<evidence type="ECO:0000305" key="4"/>
<proteinExistence type="inferred from homology"/>
<keyword id="KW-0217">Developmental protein</keyword>
<keyword id="KW-0238">DNA-binding</keyword>
<keyword id="KW-0371">Homeobox</keyword>
<keyword id="KW-0539">Nucleus</keyword>
<keyword id="KW-1185">Reference proteome</keyword>
<keyword id="KW-0716">Sensory transduction</keyword>
<keyword id="KW-0844">Vision</keyword>
<dbReference type="EMBL" id="M35372">
    <property type="protein sequence ID" value="AAA28861.1"/>
    <property type="molecule type" value="Genomic_DNA"/>
</dbReference>
<dbReference type="EMBL" id="CH940650">
    <property type="protein sequence ID" value="EDW68319.1"/>
    <property type="molecule type" value="Genomic_DNA"/>
</dbReference>
<dbReference type="PIR" id="A35967">
    <property type="entry name" value="A35967"/>
</dbReference>
<dbReference type="RefSeq" id="XP_002054799.2">
    <property type="nucleotide sequence ID" value="XM_002054763.2"/>
</dbReference>
<dbReference type="RefSeq" id="XP_032295015.1">
    <property type="nucleotide sequence ID" value="XM_032439124.2"/>
</dbReference>
<dbReference type="SMR" id="P18264"/>
<dbReference type="FunCoup" id="P18264">
    <property type="interactions" value="155"/>
</dbReference>
<dbReference type="STRING" id="7244.P18264"/>
<dbReference type="EnsemblMetazoa" id="FBtr0438731">
    <property type="protein sequence ID" value="FBpp0395458"/>
    <property type="gene ID" value="FBgn0013136"/>
</dbReference>
<dbReference type="EnsemblMetazoa" id="XM_032439124.1">
    <property type="protein sequence ID" value="XP_032295015.1"/>
    <property type="gene ID" value="LOC6630225"/>
</dbReference>
<dbReference type="GeneID" id="6630225"/>
<dbReference type="eggNOG" id="KOG0489">
    <property type="taxonomic scope" value="Eukaryota"/>
</dbReference>
<dbReference type="HOGENOM" id="CLU_792903_0_0_1"/>
<dbReference type="InParanoid" id="P18264"/>
<dbReference type="OMA" id="VGTHHET"/>
<dbReference type="OrthoDB" id="6159439at2759"/>
<dbReference type="PhylomeDB" id="P18264"/>
<dbReference type="Proteomes" id="UP000008792">
    <property type="component" value="Unassembled WGS sequence"/>
</dbReference>
<dbReference type="GO" id="GO:0005634">
    <property type="term" value="C:nucleus"/>
    <property type="evidence" value="ECO:0000250"/>
    <property type="project" value="UniProtKB"/>
</dbReference>
<dbReference type="GO" id="GO:0000981">
    <property type="term" value="F:DNA-binding transcription factor activity, RNA polymerase II-specific"/>
    <property type="evidence" value="ECO:0007669"/>
    <property type="project" value="InterPro"/>
</dbReference>
<dbReference type="GO" id="GO:0000977">
    <property type="term" value="F:RNA polymerase II transcription regulatory region sequence-specific DNA binding"/>
    <property type="evidence" value="ECO:0007669"/>
    <property type="project" value="EnsemblMetazoa"/>
</dbReference>
<dbReference type="GO" id="GO:0042067">
    <property type="term" value="P:establishment of ommatidial planar polarity"/>
    <property type="evidence" value="ECO:0000250"/>
    <property type="project" value="UniProtKB"/>
</dbReference>
<dbReference type="GO" id="GO:0045944">
    <property type="term" value="P:positive regulation of transcription by RNA polymerase II"/>
    <property type="evidence" value="ECO:0007669"/>
    <property type="project" value="EnsemblMetazoa"/>
</dbReference>
<dbReference type="GO" id="GO:0007463">
    <property type="term" value="P:R2/R5 cell fate commitment"/>
    <property type="evidence" value="ECO:0000250"/>
    <property type="project" value="UniProtKB"/>
</dbReference>
<dbReference type="GO" id="GO:0007601">
    <property type="term" value="P:visual perception"/>
    <property type="evidence" value="ECO:0007669"/>
    <property type="project" value="UniProtKB-KW"/>
</dbReference>
<dbReference type="CDD" id="cd00086">
    <property type="entry name" value="homeodomain"/>
    <property type="match status" value="1"/>
</dbReference>
<dbReference type="FunFam" id="1.10.10.60:FF:000417">
    <property type="entry name" value="Even-skipped homeobox 1"/>
    <property type="match status" value="1"/>
</dbReference>
<dbReference type="Gene3D" id="1.10.10.60">
    <property type="entry name" value="Homeodomain-like"/>
    <property type="match status" value="1"/>
</dbReference>
<dbReference type="InterPro" id="IPR001356">
    <property type="entry name" value="HD"/>
</dbReference>
<dbReference type="InterPro" id="IPR020479">
    <property type="entry name" value="HD_metazoa"/>
</dbReference>
<dbReference type="InterPro" id="IPR017970">
    <property type="entry name" value="Homeobox_CS"/>
</dbReference>
<dbReference type="InterPro" id="IPR050848">
    <property type="entry name" value="Homeobox_TF"/>
</dbReference>
<dbReference type="InterPro" id="IPR009057">
    <property type="entry name" value="Homeodomain-like_sf"/>
</dbReference>
<dbReference type="PANTHER" id="PTHR24333">
    <property type="entry name" value="HOMEO BOX HB9 LIKE A-RELATED"/>
    <property type="match status" value="1"/>
</dbReference>
<dbReference type="PANTHER" id="PTHR24333:SF8">
    <property type="entry name" value="HOMEOBOX PROTEIN CEH-62"/>
    <property type="match status" value="1"/>
</dbReference>
<dbReference type="Pfam" id="PF00046">
    <property type="entry name" value="Homeodomain"/>
    <property type="match status" value="1"/>
</dbReference>
<dbReference type="PRINTS" id="PR00024">
    <property type="entry name" value="HOMEOBOX"/>
</dbReference>
<dbReference type="SMART" id="SM00389">
    <property type="entry name" value="HOX"/>
    <property type="match status" value="1"/>
</dbReference>
<dbReference type="SUPFAM" id="SSF46689">
    <property type="entry name" value="Homeodomain-like"/>
    <property type="match status" value="1"/>
</dbReference>
<dbReference type="PROSITE" id="PS00027">
    <property type="entry name" value="HOMEOBOX_1"/>
    <property type="match status" value="1"/>
</dbReference>
<dbReference type="PROSITE" id="PS50071">
    <property type="entry name" value="HOMEOBOX_2"/>
    <property type="match status" value="1"/>
</dbReference>
<reference key="1">
    <citation type="journal article" date="1990" name="Proc. Natl. Acad. Sci. U.S.A.">
        <title>Structural and functional comparisons of the Drosophila virilis and Drosophila melanogaster rough genes.</title>
        <authorList>
            <person name="Heberlein U."/>
            <person name="Rubin G.M."/>
        </authorList>
    </citation>
    <scope>NUCLEOTIDE SEQUENCE [GENOMIC DNA]</scope>
</reference>
<reference key="2">
    <citation type="journal article" date="2007" name="Nature">
        <title>Evolution of genes and genomes on the Drosophila phylogeny.</title>
        <authorList>
            <consortium name="Drosophila 12 genomes consortium"/>
        </authorList>
    </citation>
    <scope>NUCLEOTIDE SEQUENCE [LARGE SCALE GENOMIC DNA]</scope>
    <source>
        <strain>Tucson 15010-1051.87</strain>
    </source>
</reference>
<feature type="chain" id="PRO_0000049077" description="Homeobox protein rough">
    <location>
        <begin position="1"/>
        <end position="340"/>
    </location>
</feature>
<feature type="DNA-binding region" description="Homeobox" evidence="2">
    <location>
        <begin position="164"/>
        <end position="223"/>
    </location>
</feature>
<feature type="region of interest" description="Disordered" evidence="3">
    <location>
        <begin position="1"/>
        <end position="51"/>
    </location>
</feature>
<feature type="region of interest" description="Disordered" evidence="3">
    <location>
        <begin position="64"/>
        <end position="96"/>
    </location>
</feature>
<feature type="region of interest" description="Disordered" evidence="3">
    <location>
        <begin position="300"/>
        <end position="340"/>
    </location>
</feature>
<feature type="compositionally biased region" description="Low complexity" evidence="3">
    <location>
        <begin position="18"/>
        <end position="37"/>
    </location>
</feature>
<feature type="compositionally biased region" description="Polar residues" evidence="3">
    <location>
        <begin position="83"/>
        <end position="96"/>
    </location>
</feature>
<feature type="compositionally biased region" description="Low complexity" evidence="3">
    <location>
        <begin position="314"/>
        <end position="325"/>
    </location>
</feature>
<feature type="compositionally biased region" description="Pro residues" evidence="3">
    <location>
        <begin position="331"/>
        <end position="340"/>
    </location>
</feature>
<feature type="sequence conflict" description="In Ref. 1; AAA28861." evidence="4" ref="1">
    <original>Q</original>
    <variation>K</variation>
    <location>
        <position position="14"/>
    </location>
</feature>
<feature type="sequence conflict" description="In Ref. 1; AAA28861." evidence="4" ref="1">
    <original>I</original>
    <variation>M</variation>
    <location>
        <position position="38"/>
    </location>
</feature>
<feature type="sequence conflict" description="In Ref. 1; AAA28861." evidence="4" ref="1">
    <original>A</original>
    <variation>G</variation>
    <location>
        <position position="256"/>
    </location>
</feature>
<feature type="sequence conflict" description="In Ref. 1; AAA28861." evidence="4" ref="1">
    <original>L</original>
    <variation>V</variation>
    <location>
        <position position="280"/>
    </location>
</feature>
<feature type="sequence conflict" description="In Ref. 1; AAA28861." evidence="4" ref="1">
    <original>R</original>
    <variation>H</variation>
    <location>
        <position position="289"/>
    </location>
</feature>
<feature type="sequence conflict" description="In Ref. 1; AAA28861." evidence="4" ref="1">
    <location>
        <position position="310"/>
    </location>
</feature>
<organism>
    <name type="scientific">Drosophila virilis</name>
    <name type="common">Fruit fly</name>
    <dbReference type="NCBI Taxonomy" id="7244"/>
    <lineage>
        <taxon>Eukaryota</taxon>
        <taxon>Metazoa</taxon>
        <taxon>Ecdysozoa</taxon>
        <taxon>Arthropoda</taxon>
        <taxon>Hexapoda</taxon>
        <taxon>Insecta</taxon>
        <taxon>Pterygota</taxon>
        <taxon>Neoptera</taxon>
        <taxon>Endopterygota</taxon>
        <taxon>Diptera</taxon>
        <taxon>Brachycera</taxon>
        <taxon>Muscomorpha</taxon>
        <taxon>Ephydroidea</taxon>
        <taxon>Drosophilidae</taxon>
        <taxon>Drosophila</taxon>
    </lineage>
</organism>
<accession>P18264</accession>
<accession>B4M069</accession>
<gene>
    <name type="primary">ro</name>
    <name type="ORF">GJ22592</name>
</gene>
<protein>
    <recommendedName>
        <fullName>Homeobox protein rough</fullName>
    </recommendedName>
</protein>
<sequence length="340" mass="37929">MLQQNPSSPLHAEQFIKSSNSTPTATPAPASATATAPIHTVLATPQRPSSPRQFFERLYGHLETRTHNSESGDIDVGTHAETPYQSDGGSASSPDISISDERVSLVSFPSYELHAPTPDYSAYGAIANATLPPALSFPAFSADPHINAGFSAFLARRRRKEGRQRRQRTTFSTEQTLRLEVEFHRNEYISRSRRFELAETLRLSETQIKIWFQNRRAKDKRIEKAQIDQHYRNFVVANGFMSTIMGQTSYATSAPATSSAAATAAAMLGSSYYAATPALLPSTLVNNARRADVNYVDIEAQHQQQQQHHHQVHPDQQQQQQQQQQRRSRFVPPPTLINSC</sequence>
<comment type="function">
    <text evidence="1">Required to establish the unique cell identity of photoreceptors R2 and R5 and consequently for ommatidial assembly in the developing eye imaginal disk. Repression of expression in R8 photoreceptor by senseless (sens) is an essential mechanism of R8 cell fate determination (By similarity).</text>
</comment>
<comment type="subcellular location">
    <subcellularLocation>
        <location evidence="2">Nucleus</location>
    </subcellularLocation>
    <text evidence="1">Restricted to nuclei in the developing retina.</text>
</comment>
<name>ROUGH_DROVI</name>